<keyword id="KW-0067">ATP-binding</keyword>
<keyword id="KW-0413">Isomerase</keyword>
<keyword id="KW-0418">Kinase</keyword>
<keyword id="KW-0460">Magnesium</keyword>
<keyword id="KW-0479">Metal-binding</keyword>
<keyword id="KW-0547">Nucleotide-binding</keyword>
<keyword id="KW-1185">Reference proteome</keyword>
<keyword id="KW-0808">Transferase</keyword>
<sequence length="396" mass="44193">MQTFVKGKRVGYWLSEKKIKKLNFQTFVDLCRKQGIEMIQLDLSQPIESQGPFDVIIHKLTDHIVDADQNVTESLLLVQGVQDYIDAHPETVILDPLPAIRTLLDRCKSYKLIHKLEHSMEDDRICSPPFMVLKTECGFETLEQLHKHGITFPFICKPQVAHGTNSHEMAIIFSEEDLKDIKPPCVLQSFINHNAVLYKVFVVGEAYSVVQRPSIRNFPSGPTDRRAISFNSHHVSKPESSSHLTCRDNMVGQSWKPSNEVIQKISRKLHQALGISLFGIDIIINNQTGQHAVIDINAFPGYEGVPEFFDDLLSHISSVLQGQVCNGVACGHLRVNGTAQSQTVHCGMLGNDSSWLMDSEGIKKGPHQGLSCCGGCMTPNFHQHTRSSLTAETSSQ</sequence>
<feature type="chain" id="PRO_0000220836" description="Inositol-tetrakisphosphate 1-kinase">
    <location>
        <begin position="1"/>
        <end position="396"/>
    </location>
</feature>
<feature type="domain" description="ATP-grasp" evidence="3">
    <location>
        <begin position="117"/>
        <end position="325"/>
    </location>
</feature>
<feature type="binding site" evidence="1">
    <location>
        <position position="18"/>
    </location>
    <ligand>
        <name>1D-myo-inositol 1,3,4-trisphosphate</name>
        <dbReference type="ChEBI" id="CHEBI:58414"/>
    </ligand>
</feature>
<feature type="binding site" evidence="1">
    <location>
        <position position="106"/>
    </location>
    <ligand>
        <name>ATP</name>
        <dbReference type="ChEBI" id="CHEBI:30616"/>
    </ligand>
</feature>
<feature type="binding site" evidence="1">
    <location>
        <position position="157"/>
    </location>
    <ligand>
        <name>ATP</name>
        <dbReference type="ChEBI" id="CHEBI:30616"/>
    </ligand>
</feature>
<feature type="binding site" evidence="1">
    <location>
        <position position="167"/>
    </location>
    <ligand>
        <name>1D-myo-inositol 1,3,4-trisphosphate</name>
        <dbReference type="ChEBI" id="CHEBI:58414"/>
    </ligand>
</feature>
<feature type="binding site" evidence="3">
    <location>
        <begin position="188"/>
        <end position="199"/>
    </location>
    <ligand>
        <name>ATP</name>
        <dbReference type="ChEBI" id="CHEBI:30616"/>
    </ligand>
</feature>
<feature type="binding site" evidence="1">
    <location>
        <position position="199"/>
    </location>
    <ligand>
        <name>1D-myo-inositol 1,3,4-trisphosphate</name>
        <dbReference type="ChEBI" id="CHEBI:58414"/>
    </ligand>
</feature>
<feature type="binding site" evidence="1">
    <location>
        <position position="214"/>
    </location>
    <ligand>
        <name>ATP</name>
        <dbReference type="ChEBI" id="CHEBI:30616"/>
    </ligand>
</feature>
<feature type="binding site" evidence="1">
    <location>
        <position position="232"/>
    </location>
    <ligand>
        <name>ATP</name>
        <dbReference type="ChEBI" id="CHEBI:30616"/>
    </ligand>
</feature>
<feature type="binding site" evidence="1">
    <location>
        <position position="236"/>
    </location>
    <ligand>
        <name>ATP</name>
        <dbReference type="ChEBI" id="CHEBI:30616"/>
    </ligand>
</feature>
<feature type="binding site" evidence="1">
    <location>
        <position position="281"/>
    </location>
    <ligand>
        <name>Mg(2+)</name>
        <dbReference type="ChEBI" id="CHEBI:18420"/>
        <label>1</label>
    </ligand>
</feature>
<feature type="binding site" evidence="1">
    <location>
        <position position="295"/>
    </location>
    <ligand>
        <name>Mg(2+)</name>
        <dbReference type="ChEBI" id="CHEBI:18420"/>
        <label>1</label>
    </ligand>
</feature>
<feature type="binding site" evidence="1">
    <location>
        <position position="295"/>
    </location>
    <ligand>
        <name>Mg(2+)</name>
        <dbReference type="ChEBI" id="CHEBI:18420"/>
        <label>2</label>
    </ligand>
</feature>
<feature type="binding site" evidence="1">
    <location>
        <position position="297"/>
    </location>
    <ligand>
        <name>1D-myo-inositol 1,3,4-trisphosphate</name>
        <dbReference type="ChEBI" id="CHEBI:58414"/>
    </ligand>
</feature>
<feature type="binding site" evidence="1">
    <location>
        <position position="297"/>
    </location>
    <ligand>
        <name>Mg(2+)</name>
        <dbReference type="ChEBI" id="CHEBI:18420"/>
        <label>2</label>
    </ligand>
</feature>
<feature type="sequence conflict" description="In Ref. 2; AAH50497." evidence="4" ref="2">
    <original>T</original>
    <variation>A</variation>
    <location>
        <position position="91"/>
    </location>
</feature>
<feature type="sequence conflict" description="In Ref. 2; AAH50497." evidence="4" ref="2">
    <original>H</original>
    <variation>R</variation>
    <location>
        <position position="270"/>
    </location>
</feature>
<gene>
    <name type="primary">itpk1</name>
    <name type="ORF">zgc:56075</name>
</gene>
<organism>
    <name type="scientific">Danio rerio</name>
    <name type="common">Zebrafish</name>
    <name type="synonym">Brachydanio rerio</name>
    <dbReference type="NCBI Taxonomy" id="7955"/>
    <lineage>
        <taxon>Eukaryota</taxon>
        <taxon>Metazoa</taxon>
        <taxon>Chordata</taxon>
        <taxon>Craniata</taxon>
        <taxon>Vertebrata</taxon>
        <taxon>Euteleostomi</taxon>
        <taxon>Actinopterygii</taxon>
        <taxon>Neopterygii</taxon>
        <taxon>Teleostei</taxon>
        <taxon>Ostariophysi</taxon>
        <taxon>Cypriniformes</taxon>
        <taxon>Danionidae</taxon>
        <taxon>Danioninae</taxon>
        <taxon>Danio</taxon>
    </lineage>
</organism>
<proteinExistence type="evidence at transcript level"/>
<reference key="1">
    <citation type="journal article" date="2013" name="Nature">
        <title>The zebrafish reference genome sequence and its relationship to the human genome.</title>
        <authorList>
            <person name="Howe K."/>
            <person name="Clark M.D."/>
            <person name="Torroja C.F."/>
            <person name="Torrance J."/>
            <person name="Berthelot C."/>
            <person name="Muffato M."/>
            <person name="Collins J.E."/>
            <person name="Humphray S."/>
            <person name="McLaren K."/>
            <person name="Matthews L."/>
            <person name="McLaren S."/>
            <person name="Sealy I."/>
            <person name="Caccamo M."/>
            <person name="Churcher C."/>
            <person name="Scott C."/>
            <person name="Barrett J.C."/>
            <person name="Koch R."/>
            <person name="Rauch G.J."/>
            <person name="White S."/>
            <person name="Chow W."/>
            <person name="Kilian B."/>
            <person name="Quintais L.T."/>
            <person name="Guerra-Assuncao J.A."/>
            <person name="Zhou Y."/>
            <person name="Gu Y."/>
            <person name="Yen J."/>
            <person name="Vogel J.H."/>
            <person name="Eyre T."/>
            <person name="Redmond S."/>
            <person name="Banerjee R."/>
            <person name="Chi J."/>
            <person name="Fu B."/>
            <person name="Langley E."/>
            <person name="Maguire S.F."/>
            <person name="Laird G.K."/>
            <person name="Lloyd D."/>
            <person name="Kenyon E."/>
            <person name="Donaldson S."/>
            <person name="Sehra H."/>
            <person name="Almeida-King J."/>
            <person name="Loveland J."/>
            <person name="Trevanion S."/>
            <person name="Jones M."/>
            <person name="Quail M."/>
            <person name="Willey D."/>
            <person name="Hunt A."/>
            <person name="Burton J."/>
            <person name="Sims S."/>
            <person name="McLay K."/>
            <person name="Plumb B."/>
            <person name="Davis J."/>
            <person name="Clee C."/>
            <person name="Oliver K."/>
            <person name="Clark R."/>
            <person name="Riddle C."/>
            <person name="Elliot D."/>
            <person name="Threadgold G."/>
            <person name="Harden G."/>
            <person name="Ware D."/>
            <person name="Begum S."/>
            <person name="Mortimore B."/>
            <person name="Kerry G."/>
            <person name="Heath P."/>
            <person name="Phillimore B."/>
            <person name="Tracey A."/>
            <person name="Corby N."/>
            <person name="Dunn M."/>
            <person name="Johnson C."/>
            <person name="Wood J."/>
            <person name="Clark S."/>
            <person name="Pelan S."/>
            <person name="Griffiths G."/>
            <person name="Smith M."/>
            <person name="Glithero R."/>
            <person name="Howden P."/>
            <person name="Barker N."/>
            <person name="Lloyd C."/>
            <person name="Stevens C."/>
            <person name="Harley J."/>
            <person name="Holt K."/>
            <person name="Panagiotidis G."/>
            <person name="Lovell J."/>
            <person name="Beasley H."/>
            <person name="Henderson C."/>
            <person name="Gordon D."/>
            <person name="Auger K."/>
            <person name="Wright D."/>
            <person name="Collins J."/>
            <person name="Raisen C."/>
            <person name="Dyer L."/>
            <person name="Leung K."/>
            <person name="Robertson L."/>
            <person name="Ambridge K."/>
            <person name="Leongamornlert D."/>
            <person name="McGuire S."/>
            <person name="Gilderthorp R."/>
            <person name="Griffiths C."/>
            <person name="Manthravadi D."/>
            <person name="Nichol S."/>
            <person name="Barker G."/>
            <person name="Whitehead S."/>
            <person name="Kay M."/>
            <person name="Brown J."/>
            <person name="Murnane C."/>
            <person name="Gray E."/>
            <person name="Humphries M."/>
            <person name="Sycamore N."/>
            <person name="Barker D."/>
            <person name="Saunders D."/>
            <person name="Wallis J."/>
            <person name="Babbage A."/>
            <person name="Hammond S."/>
            <person name="Mashreghi-Mohammadi M."/>
            <person name="Barr L."/>
            <person name="Martin S."/>
            <person name="Wray P."/>
            <person name="Ellington A."/>
            <person name="Matthews N."/>
            <person name="Ellwood M."/>
            <person name="Woodmansey R."/>
            <person name="Clark G."/>
            <person name="Cooper J."/>
            <person name="Tromans A."/>
            <person name="Grafham D."/>
            <person name="Skuce C."/>
            <person name="Pandian R."/>
            <person name="Andrews R."/>
            <person name="Harrison E."/>
            <person name="Kimberley A."/>
            <person name="Garnett J."/>
            <person name="Fosker N."/>
            <person name="Hall R."/>
            <person name="Garner P."/>
            <person name="Kelly D."/>
            <person name="Bird C."/>
            <person name="Palmer S."/>
            <person name="Gehring I."/>
            <person name="Berger A."/>
            <person name="Dooley C.M."/>
            <person name="Ersan-Urun Z."/>
            <person name="Eser C."/>
            <person name="Geiger H."/>
            <person name="Geisler M."/>
            <person name="Karotki L."/>
            <person name="Kirn A."/>
            <person name="Konantz J."/>
            <person name="Konantz M."/>
            <person name="Oberlander M."/>
            <person name="Rudolph-Geiger S."/>
            <person name="Teucke M."/>
            <person name="Lanz C."/>
            <person name="Raddatz G."/>
            <person name="Osoegawa K."/>
            <person name="Zhu B."/>
            <person name="Rapp A."/>
            <person name="Widaa S."/>
            <person name="Langford C."/>
            <person name="Yang F."/>
            <person name="Schuster S.C."/>
            <person name="Carter N.P."/>
            <person name="Harrow J."/>
            <person name="Ning Z."/>
            <person name="Herrero J."/>
            <person name="Searle S.M."/>
            <person name="Enright A."/>
            <person name="Geisler R."/>
            <person name="Plasterk R.H."/>
            <person name="Lee C."/>
            <person name="Westerfield M."/>
            <person name="de Jong P.J."/>
            <person name="Zon L.I."/>
            <person name="Postlethwait J.H."/>
            <person name="Nusslein-Volhard C."/>
            <person name="Hubbard T.J."/>
            <person name="Roest Crollius H."/>
            <person name="Rogers J."/>
            <person name="Stemple D.L."/>
        </authorList>
    </citation>
    <scope>NUCLEOTIDE SEQUENCE [LARGE SCALE GENOMIC DNA]</scope>
    <source>
        <strain>Tuebingen</strain>
    </source>
</reference>
<reference key="2">
    <citation type="submission" date="2003-04" db="EMBL/GenBank/DDBJ databases">
        <authorList>
            <consortium name="NIH - Zebrafish Gene Collection (ZGC) project"/>
        </authorList>
    </citation>
    <scope>NUCLEOTIDE SEQUENCE [LARGE SCALE MRNA]</scope>
    <source>
        <strain>SJD</strain>
    </source>
</reference>
<accession>Q7ZU91</accession>
<accession>Q5RIJ9</accession>
<protein>
    <recommendedName>
        <fullName>Inositol-tetrakisphosphate 1-kinase</fullName>
        <ecNumber evidence="2">2.7.1.134</ecNumber>
    </recommendedName>
    <alternativeName>
        <fullName>Inositol 1,3,4-trisphosphate 5/6-kinase</fullName>
        <shortName>Inositol-triphosphate 5/6-kinase</shortName>
        <shortName>Ins(1,3,4)P(3) 5/6-kinase</shortName>
        <ecNumber evidence="2">2.7.1.159</ecNumber>
    </alternativeName>
</protein>
<comment type="function">
    <text evidence="2">Kinase that can phosphorylate various inositol polyphosphate such as Ins(3,4,5,6)P4 or Ins(1,3,4)P3. Phosphorylates Ins(3,4,5,6)P4 at position 1 to form Ins(1,3,4,5,6)P5. This reaction is thought to have regulatory importance, since Ins(3,4,5,6)P4 is an inhibitor of plasma membrane Ca(2+)-activated Cl(-) channels, while Ins(1,3,4,5,6)P5 is not. Also phosphorylates Ins(1,3,4)P3 on O-5 and O-6 to form Ins(1,3,4,6)P4, an essential molecule in the hexakisphosphate (InsP6) pathway. Also acts as an inositol polyphosphate phosphatase that dephosphorylates Ins(1,3,4,5)P4 and Ins(1,3,4,6)P4 to Ins(1,3,4)P3, and Ins(1,3,4,5,6)P5 to Ins(3,4,5,6)P4. May also act as an isomerase that interconverts the inositol tetrakisphosphate isomers Ins(1,3,4,5)P4 and Ins(1,3,4,6)P4 in the presence of ADP and magnesium. Probably acts as the rate-limiting enzyme of the InsP6 pathway. Modifies TNF-alpha-induced apoptosis by interfering with the activation of TNFRSF1A-associated death domain. Plays an important role in MLKL-mediated necroptosis. Produces highly phosphorylated inositol phosphates such as inositolhexakisphosphate (InsP6) which bind to MLKL mediating the release of an N-terminal auto-inhibitory region leading to its activation. Essential for activated phospho-MLKL to oligomerize and localize to the cell membrane during necroptosis.</text>
</comment>
<comment type="catalytic activity">
    <reaction evidence="2">
        <text>1D-myo-inositol 3,4,5,6-tetrakisphosphate + ATP = 1D-myo-inositol 1,3,4,5,6-pentakisphosphate + ADP + H(+)</text>
        <dbReference type="Rhea" id="RHEA:12452"/>
        <dbReference type="ChEBI" id="CHEBI:15378"/>
        <dbReference type="ChEBI" id="CHEBI:30616"/>
        <dbReference type="ChEBI" id="CHEBI:57539"/>
        <dbReference type="ChEBI" id="CHEBI:57733"/>
        <dbReference type="ChEBI" id="CHEBI:456216"/>
        <dbReference type="EC" id="2.7.1.134"/>
    </reaction>
    <physiologicalReaction direction="left-to-right" evidence="2">
        <dbReference type="Rhea" id="RHEA:12453"/>
    </physiologicalReaction>
    <physiologicalReaction direction="right-to-left" evidence="2">
        <dbReference type="Rhea" id="RHEA:12454"/>
    </physiologicalReaction>
</comment>
<comment type="catalytic activity">
    <reaction evidence="2">
        <text>1D-myo-inositol 1,3,4-trisphosphate + ATP = 1D-myo-inositol 1,3,4,5-tetrakisphosphate + ADP + H(+)</text>
        <dbReference type="Rhea" id="RHEA:13253"/>
        <dbReference type="ChEBI" id="CHEBI:15378"/>
        <dbReference type="ChEBI" id="CHEBI:30616"/>
        <dbReference type="ChEBI" id="CHEBI:57895"/>
        <dbReference type="ChEBI" id="CHEBI:58414"/>
        <dbReference type="ChEBI" id="CHEBI:456216"/>
        <dbReference type="EC" id="2.7.1.159"/>
    </reaction>
    <physiologicalReaction direction="left-to-right" evidence="2">
        <dbReference type="Rhea" id="RHEA:13254"/>
    </physiologicalReaction>
    <physiologicalReaction direction="right-to-left" evidence="2">
        <dbReference type="Rhea" id="RHEA:13255"/>
    </physiologicalReaction>
</comment>
<comment type="catalytic activity">
    <reaction evidence="2">
        <text>1D-myo-inositol 1,3,4-trisphosphate + ATP = 1D-myo-inositol 1,3,4,6-tetrakisphosphate + ADP + H(+)</text>
        <dbReference type="Rhea" id="RHEA:20940"/>
        <dbReference type="ChEBI" id="CHEBI:15378"/>
        <dbReference type="ChEBI" id="CHEBI:30616"/>
        <dbReference type="ChEBI" id="CHEBI:57660"/>
        <dbReference type="ChEBI" id="CHEBI:58414"/>
        <dbReference type="ChEBI" id="CHEBI:456216"/>
        <dbReference type="EC" id="2.7.1.159"/>
    </reaction>
    <physiologicalReaction direction="left-to-right" evidence="2">
        <dbReference type="Rhea" id="RHEA:20941"/>
    </physiologicalReaction>
    <physiologicalReaction direction="right-to-left" evidence="2">
        <dbReference type="Rhea" id="RHEA:20942"/>
    </physiologicalReaction>
</comment>
<comment type="catalytic activity">
    <reaction evidence="2">
        <text>1D-myo-inositol 3,4,6-trisphosphate + ATP = 1D-myo-inositol 1,3,4,6-tetrakisphosphate + ADP + H(+)</text>
        <dbReference type="Rhea" id="RHEA:70287"/>
        <dbReference type="ChEBI" id="CHEBI:15378"/>
        <dbReference type="ChEBI" id="CHEBI:30616"/>
        <dbReference type="ChEBI" id="CHEBI:57660"/>
        <dbReference type="ChEBI" id="CHEBI:189099"/>
        <dbReference type="ChEBI" id="CHEBI:456216"/>
    </reaction>
    <physiologicalReaction direction="left-to-right" evidence="2">
        <dbReference type="Rhea" id="RHEA:70288"/>
    </physiologicalReaction>
    <physiologicalReaction direction="right-to-left" evidence="2">
        <dbReference type="Rhea" id="RHEA:70289"/>
    </physiologicalReaction>
</comment>
<comment type="catalytic activity">
    <reaction evidence="2">
        <text>1D-myo-inositol 1,3,4-trisphosphate + 1D-myo-inositol 1,3,4,5,6-pentakisphosphate = 1D-myo-inositol 3,4,5,6-tetrakisphosphate + 1D-myo-inositol 1,3,4,6-tetrakisphosphate</text>
        <dbReference type="Rhea" id="RHEA:70263"/>
        <dbReference type="ChEBI" id="CHEBI:57539"/>
        <dbReference type="ChEBI" id="CHEBI:57660"/>
        <dbReference type="ChEBI" id="CHEBI:57733"/>
        <dbReference type="ChEBI" id="CHEBI:58414"/>
    </reaction>
    <physiologicalReaction direction="left-to-right" evidence="2">
        <dbReference type="Rhea" id="RHEA:70264"/>
    </physiologicalReaction>
    <physiologicalReaction direction="right-to-left" evidence="2">
        <dbReference type="Rhea" id="RHEA:70265"/>
    </physiologicalReaction>
</comment>
<comment type="catalytic activity">
    <reaction evidence="2">
        <text>1D-myo-inositol 1,3,4-trisphosphate + 1D-myo-inositol 1,3,4,5,6-pentakisphosphate = 1D-myo-inositol 3,4,5,6-tetrakisphosphate + 1D-myo-inositol 1,3,4,5-tetrakisphosphate</text>
        <dbReference type="Rhea" id="RHEA:70271"/>
        <dbReference type="ChEBI" id="CHEBI:57539"/>
        <dbReference type="ChEBI" id="CHEBI:57733"/>
        <dbReference type="ChEBI" id="CHEBI:57895"/>
        <dbReference type="ChEBI" id="CHEBI:58414"/>
    </reaction>
    <physiologicalReaction direction="left-to-right" evidence="2">
        <dbReference type="Rhea" id="RHEA:70272"/>
    </physiologicalReaction>
    <physiologicalReaction direction="right-to-left" evidence="2">
        <dbReference type="Rhea" id="RHEA:70273"/>
    </physiologicalReaction>
</comment>
<comment type="cofactor">
    <cofactor evidence="2">
        <name>Mg(2+)</name>
        <dbReference type="ChEBI" id="CHEBI:18420"/>
    </cofactor>
    <text evidence="2">Binds 2 magnesium ions per subunit.</text>
</comment>
<comment type="subunit">
    <text evidence="1">Monomer.</text>
</comment>
<comment type="similarity">
    <text evidence="4">Belongs to the ITPK1 family.</text>
</comment>
<name>ITPK1_DANRE</name>
<dbReference type="EC" id="2.7.1.134" evidence="2"/>
<dbReference type="EC" id="2.7.1.159" evidence="2"/>
<dbReference type="EMBL" id="BX248515">
    <property type="protein sequence ID" value="CAI20735.1"/>
    <property type="molecule type" value="Genomic_DNA"/>
</dbReference>
<dbReference type="EMBL" id="BC050497">
    <property type="protein sequence ID" value="AAH50497.1"/>
    <property type="molecule type" value="mRNA"/>
</dbReference>
<dbReference type="RefSeq" id="NP_998182.1">
    <property type="nucleotide sequence ID" value="NM_213017.1"/>
</dbReference>
<dbReference type="RefSeq" id="XP_009298398.1">
    <property type="nucleotide sequence ID" value="XM_009300123.2"/>
</dbReference>
<dbReference type="SMR" id="Q7ZU91"/>
<dbReference type="FunCoup" id="Q7ZU91">
    <property type="interactions" value="105"/>
</dbReference>
<dbReference type="STRING" id="7955.ENSDARP00000009878"/>
<dbReference type="PaxDb" id="7955-ENSDARP00000009878"/>
<dbReference type="Ensembl" id="ENSDART00000008590">
    <property type="protein sequence ID" value="ENSDARP00000009878"/>
    <property type="gene ID" value="ENSDARG00000013056"/>
</dbReference>
<dbReference type="GeneID" id="406290"/>
<dbReference type="KEGG" id="dre:406290"/>
<dbReference type="AGR" id="ZFIN:ZDB-GENE-040426-1953"/>
<dbReference type="CTD" id="406290"/>
<dbReference type="ZFIN" id="ZDB-GENE-040426-1953">
    <property type="gene designation" value="itpk1a"/>
</dbReference>
<dbReference type="eggNOG" id="ENOG502QQS1">
    <property type="taxonomic scope" value="Eukaryota"/>
</dbReference>
<dbReference type="HOGENOM" id="CLU_041857_1_1_1"/>
<dbReference type="InParanoid" id="Q7ZU91"/>
<dbReference type="OMA" id="SAIVHKM"/>
<dbReference type="OrthoDB" id="25308at2759"/>
<dbReference type="PhylomeDB" id="Q7ZU91"/>
<dbReference type="TreeFam" id="TF329288"/>
<dbReference type="PRO" id="PR:Q7ZU91"/>
<dbReference type="Proteomes" id="UP000000437">
    <property type="component" value="Chromosome 20"/>
</dbReference>
<dbReference type="Bgee" id="ENSDARG00000013056">
    <property type="expression patterns" value="Expressed in intestine and 17 other cell types or tissues"/>
</dbReference>
<dbReference type="GO" id="GO:0005524">
    <property type="term" value="F:ATP binding"/>
    <property type="evidence" value="ECO:0007669"/>
    <property type="project" value="UniProtKB-KW"/>
</dbReference>
<dbReference type="GO" id="GO:0000825">
    <property type="term" value="F:inositol-1,3,4,5-tetrakisphosphate 6-kinase activity"/>
    <property type="evidence" value="ECO:0000250"/>
    <property type="project" value="UniProtKB"/>
</dbReference>
<dbReference type="GO" id="GO:0052726">
    <property type="term" value="F:inositol-1,3,4-trisphosphate 5-kinase activity"/>
    <property type="evidence" value="ECO:0000318"/>
    <property type="project" value="GO_Central"/>
</dbReference>
<dbReference type="GO" id="GO:0052725">
    <property type="term" value="F:inositol-1,3,4-trisphosphate 6-kinase activity"/>
    <property type="evidence" value="ECO:0000318"/>
    <property type="project" value="GO_Central"/>
</dbReference>
<dbReference type="GO" id="GO:0047325">
    <property type="term" value="F:inositol-3,4,5,6-tetrakisphosphate 1-kinase activity"/>
    <property type="evidence" value="ECO:0000318"/>
    <property type="project" value="GO_Central"/>
</dbReference>
<dbReference type="GO" id="GO:0052835">
    <property type="term" value="F:inositol-3,4,6-trisphosphate 1-kinase activity"/>
    <property type="evidence" value="ECO:0007669"/>
    <property type="project" value="RHEA"/>
</dbReference>
<dbReference type="GO" id="GO:0016853">
    <property type="term" value="F:isomerase activity"/>
    <property type="evidence" value="ECO:0007669"/>
    <property type="project" value="UniProtKB-KW"/>
</dbReference>
<dbReference type="GO" id="GO:0000287">
    <property type="term" value="F:magnesium ion binding"/>
    <property type="evidence" value="ECO:0007669"/>
    <property type="project" value="InterPro"/>
</dbReference>
<dbReference type="GO" id="GO:0032957">
    <property type="term" value="P:inositol trisphosphate metabolic process"/>
    <property type="evidence" value="ECO:0007669"/>
    <property type="project" value="InterPro"/>
</dbReference>
<dbReference type="GO" id="GO:0070266">
    <property type="term" value="P:necroptotic process"/>
    <property type="evidence" value="ECO:0000250"/>
    <property type="project" value="UniProtKB"/>
</dbReference>
<dbReference type="FunFam" id="3.30.1490.220:FF:000001">
    <property type="entry name" value="Inositol-tetrakisphosphate 1-kinase"/>
    <property type="match status" value="1"/>
</dbReference>
<dbReference type="FunFam" id="3.40.50.11370:FF:000001">
    <property type="entry name" value="Inositol-tetrakisphosphate 1-kinase"/>
    <property type="match status" value="1"/>
</dbReference>
<dbReference type="FunFam" id="3.30.470.20:FF:000047">
    <property type="entry name" value="Inositol-tetrakisphosphate 1-kinase 4"/>
    <property type="match status" value="1"/>
</dbReference>
<dbReference type="Gene3D" id="3.30.1490.220">
    <property type="match status" value="1"/>
</dbReference>
<dbReference type="Gene3D" id="3.40.50.11370">
    <property type="match status" value="1"/>
</dbReference>
<dbReference type="Gene3D" id="3.30.470.20">
    <property type="entry name" value="ATP-grasp fold, B domain"/>
    <property type="match status" value="1"/>
</dbReference>
<dbReference type="InterPro" id="IPR011761">
    <property type="entry name" value="ATP-grasp"/>
</dbReference>
<dbReference type="InterPro" id="IPR008656">
    <property type="entry name" value="Inositol_tetrakis-P_1-kinase"/>
</dbReference>
<dbReference type="InterPro" id="IPR040464">
    <property type="entry name" value="InsP(3)kin_ATP-grasp"/>
</dbReference>
<dbReference type="InterPro" id="IPR041429">
    <property type="entry name" value="ITPK1_N"/>
</dbReference>
<dbReference type="PANTHER" id="PTHR14217">
    <property type="entry name" value="INOSITOL-TETRAKISPHOSPHATE 1-KINASE"/>
    <property type="match status" value="1"/>
</dbReference>
<dbReference type="PANTHER" id="PTHR14217:SF1">
    <property type="entry name" value="INOSITOL-TETRAKISPHOSPHATE 1-KINASE"/>
    <property type="match status" value="1"/>
</dbReference>
<dbReference type="Pfam" id="PF05770">
    <property type="entry name" value="Ins134_P3_kin"/>
    <property type="match status" value="1"/>
</dbReference>
<dbReference type="Pfam" id="PF17927">
    <property type="entry name" value="Ins134_P3_kin_N"/>
    <property type="match status" value="1"/>
</dbReference>
<dbReference type="SUPFAM" id="SSF56059">
    <property type="entry name" value="Glutathione synthetase ATP-binding domain-like"/>
    <property type="match status" value="1"/>
</dbReference>
<dbReference type="PROSITE" id="PS50975">
    <property type="entry name" value="ATP_GRASP"/>
    <property type="match status" value="1"/>
</dbReference>
<evidence type="ECO:0000250" key="1"/>
<evidence type="ECO:0000250" key="2">
    <source>
        <dbReference type="UniProtKB" id="Q13572"/>
    </source>
</evidence>
<evidence type="ECO:0000255" key="3">
    <source>
        <dbReference type="PROSITE-ProRule" id="PRU00409"/>
    </source>
</evidence>
<evidence type="ECO:0000305" key="4"/>